<reference key="1">
    <citation type="journal article" date="2005" name="Peptides">
        <title>Genomic organization of four novel nondisulfide-bridged peptides from scorpion Mesobuthus martensii Karsch: gaining insight into evolutionary mechanism.</title>
        <authorList>
            <person name="Luo F."/>
            <person name="Zeng X.-C."/>
            <person name="Hahin R."/>
            <person name="Cao Z.-J."/>
            <person name="Liu H."/>
            <person name="Li W.-X."/>
        </authorList>
    </citation>
    <scope>NUCLEOTIDE SEQUENCE [GENOMIC DNA]</scope>
</reference>
<reference key="2">
    <citation type="journal article" date="2007" name="Peptides">
        <title>Inducible antibacterial response of scorpion venom gland.</title>
        <authorList>
            <person name="Gao B."/>
            <person name="Tian C."/>
            <person name="Zhu S."/>
        </authorList>
    </citation>
    <scope>NUCLEOTIDE SEQUENCE [GENOMIC DNA]</scope>
    <scope>FUNCTION</scope>
</reference>
<feature type="signal peptide" evidence="2">
    <location>
        <begin position="1"/>
        <end position="22"/>
    </location>
</feature>
<feature type="peptide" id="PRO_0000231498" description="Peptide BmKb2">
    <location>
        <begin position="23"/>
        <end position="40"/>
    </location>
</feature>
<feature type="propeptide" id="PRO_0000289970" evidence="1">
    <location>
        <begin position="46"/>
        <end position="74"/>
    </location>
</feature>
<feature type="modified residue" description="Lysine amide" evidence="1">
    <location>
        <position position="40"/>
    </location>
</feature>
<evidence type="ECO:0000250" key="1"/>
<evidence type="ECO:0000255" key="2"/>
<evidence type="ECO:0000269" key="3">
    <source>
    </source>
</evidence>
<evidence type="ECO:0000305" key="4"/>
<dbReference type="EMBL" id="AY729077">
    <property type="protein sequence ID" value="AAW55473.1"/>
    <property type="molecule type" value="Genomic_DNA"/>
</dbReference>
<dbReference type="EMBL" id="EU158251">
    <property type="protein sequence ID" value="ABJ99487.1"/>
    <property type="molecule type" value="Genomic_DNA"/>
</dbReference>
<dbReference type="SMR" id="Q2M591"/>
<dbReference type="GO" id="GO:0005576">
    <property type="term" value="C:extracellular region"/>
    <property type="evidence" value="ECO:0007669"/>
    <property type="project" value="UniProtKB-SubCell"/>
</dbReference>
<dbReference type="GO" id="GO:0016020">
    <property type="term" value="C:membrane"/>
    <property type="evidence" value="ECO:0007669"/>
    <property type="project" value="UniProtKB-KW"/>
</dbReference>
<dbReference type="GO" id="GO:0044218">
    <property type="term" value="C:other organism cell membrane"/>
    <property type="evidence" value="ECO:0007669"/>
    <property type="project" value="UniProtKB-KW"/>
</dbReference>
<dbReference type="GO" id="GO:0042742">
    <property type="term" value="P:defense response to bacterium"/>
    <property type="evidence" value="ECO:0007669"/>
    <property type="project" value="UniProtKB-KW"/>
</dbReference>
<accession>Q2M591</accession>
<accession>A9NJI1</accession>
<keyword id="KW-0027">Amidation</keyword>
<keyword id="KW-0044">Antibiotic</keyword>
<keyword id="KW-0929">Antimicrobial</keyword>
<keyword id="KW-0165">Cleavage on pair of basic residues</keyword>
<keyword id="KW-0472">Membrane</keyword>
<keyword id="KW-0964">Secreted</keyword>
<keyword id="KW-0732">Signal</keyword>
<keyword id="KW-1052">Target cell membrane</keyword>
<keyword id="KW-1053">Target membrane</keyword>
<keyword id="KW-0812">Transmembrane</keyword>
<proteinExistence type="inferred from homology"/>
<name>NDB4T_OLIMR</name>
<sequence length="74" mass="8521">MEIKYLLTVFLVLLIVSDHCQAFLSSLIPSAISGLISAFKGRRKRDLNGQIDHFKNFRKRDAELEELLSKLPIY</sequence>
<comment type="function">
    <text evidence="3">Antibacterial peptide. This peptide gene is up-regulated at the transcriptional level after the venom gland is challenged by Gram-positive bacteria.</text>
</comment>
<comment type="subcellular location">
    <subcellularLocation>
        <location evidence="1">Secreted</location>
    </subcellularLocation>
    <subcellularLocation>
        <location evidence="1">Target cell membrane</location>
    </subcellularLocation>
    <text evidence="1">Forms a helical membrane channel in the prey.</text>
</comment>
<comment type="similarity">
    <text evidence="4">Belongs to the non-disulfide-bridged peptide (NDBP) superfamily. Short antimicrobial peptide (group 4) family.</text>
</comment>
<organism>
    <name type="scientific">Olivierus martensii</name>
    <name type="common">Manchurian scorpion</name>
    <name type="synonym">Mesobuthus martensii</name>
    <dbReference type="NCBI Taxonomy" id="34649"/>
    <lineage>
        <taxon>Eukaryota</taxon>
        <taxon>Metazoa</taxon>
        <taxon>Ecdysozoa</taxon>
        <taxon>Arthropoda</taxon>
        <taxon>Chelicerata</taxon>
        <taxon>Arachnida</taxon>
        <taxon>Scorpiones</taxon>
        <taxon>Buthida</taxon>
        <taxon>Buthoidea</taxon>
        <taxon>Buthidae</taxon>
        <taxon>Olivierus</taxon>
    </lineage>
</organism>
<protein>
    <recommendedName>
        <fullName>Peptide BmKb2</fullName>
    </recommendedName>
    <alternativeName>
        <fullName>Small cationic antibacterial peptide Kb1</fullName>
    </alternativeName>
</protein>